<name>CITD_HAEI8</name>
<reference key="1">
    <citation type="journal article" date="2005" name="J. Bacteriol.">
        <title>Genomic sequence of an otitis media isolate of nontypeable Haemophilus influenzae: comparative study with H. influenzae serotype d, strain KW20.</title>
        <authorList>
            <person name="Harrison A."/>
            <person name="Dyer D.W."/>
            <person name="Gillaspy A."/>
            <person name="Ray W.C."/>
            <person name="Mungur R."/>
            <person name="Carson M.B."/>
            <person name="Zhong H."/>
            <person name="Gipson J."/>
            <person name="Gipson M."/>
            <person name="Johnson L.S."/>
            <person name="Lewis L."/>
            <person name="Bakaletz L.O."/>
            <person name="Munson R.S. Jr."/>
        </authorList>
    </citation>
    <scope>NUCLEOTIDE SEQUENCE [LARGE SCALE GENOMIC DNA]</scope>
    <source>
        <strain>86-028NP</strain>
    </source>
</reference>
<comment type="function">
    <text evidence="1">Covalent carrier of the coenzyme of citrate lyase.</text>
</comment>
<comment type="subunit">
    <text evidence="1">Oligomer with a subunit composition of (alpha,beta,gamma)6.</text>
</comment>
<comment type="subcellular location">
    <subcellularLocation>
        <location evidence="1">Cytoplasm</location>
    </subcellularLocation>
</comment>
<comment type="similarity">
    <text evidence="1">Belongs to the CitD family.</text>
</comment>
<organism>
    <name type="scientific">Haemophilus influenzae (strain 86-028NP)</name>
    <dbReference type="NCBI Taxonomy" id="281310"/>
    <lineage>
        <taxon>Bacteria</taxon>
        <taxon>Pseudomonadati</taxon>
        <taxon>Pseudomonadota</taxon>
        <taxon>Gammaproteobacteria</taxon>
        <taxon>Pasteurellales</taxon>
        <taxon>Pasteurellaceae</taxon>
        <taxon>Haemophilus</taxon>
    </lineage>
</organism>
<proteinExistence type="inferred from homology"/>
<protein>
    <recommendedName>
        <fullName evidence="1">Citrate lyase acyl carrier protein</fullName>
    </recommendedName>
    <alternativeName>
        <fullName evidence="1">Citrate lyase gamma chain</fullName>
    </alternativeName>
</protein>
<evidence type="ECO:0000255" key="1">
    <source>
        <dbReference type="HAMAP-Rule" id="MF_00805"/>
    </source>
</evidence>
<keyword id="KW-0963">Cytoplasm</keyword>
<keyword id="KW-0597">Phosphoprotein</keyword>
<gene>
    <name evidence="1" type="primary">citD</name>
    <name type="ordered locus">NTHI0031</name>
</gene>
<feature type="chain" id="PRO_1000047069" description="Citrate lyase acyl carrier protein">
    <location>
        <begin position="1"/>
        <end position="95"/>
    </location>
</feature>
<feature type="modified residue" description="O-(phosphoribosyl dephospho-coenzyme A)serine" evidence="1">
    <location>
        <position position="14"/>
    </location>
</feature>
<sequence length="95" mass="10214">MKITKVAVAGTLESSDVQVRVQPFDSLDIEINSSVAKQFGEQIEATVREVLAKLGITAAQVIVEDKGALDCVLQARVKAAAMRATDETINWEAVL</sequence>
<accession>Q4QPM0</accession>
<dbReference type="EMBL" id="CP000057">
    <property type="protein sequence ID" value="AAX87027.1"/>
    <property type="molecule type" value="Genomic_DNA"/>
</dbReference>
<dbReference type="RefSeq" id="WP_005649866.1">
    <property type="nucleotide sequence ID" value="NC_007146.2"/>
</dbReference>
<dbReference type="SMR" id="Q4QPM0"/>
<dbReference type="GeneID" id="93220780"/>
<dbReference type="KEGG" id="hit:NTHI0031"/>
<dbReference type="HOGENOM" id="CLU_158489_0_0_6"/>
<dbReference type="Proteomes" id="UP000002525">
    <property type="component" value="Chromosome"/>
</dbReference>
<dbReference type="GO" id="GO:0005737">
    <property type="term" value="C:cytoplasm"/>
    <property type="evidence" value="ECO:0007669"/>
    <property type="project" value="UniProtKB-SubCell"/>
</dbReference>
<dbReference type="HAMAP" id="MF_00805">
    <property type="entry name" value="CitD"/>
    <property type="match status" value="1"/>
</dbReference>
<dbReference type="InterPro" id="IPR006495">
    <property type="entry name" value="CitD"/>
</dbReference>
<dbReference type="InterPro" id="IPR023439">
    <property type="entry name" value="Mal_deCO2ase/Cit_lyase_ACP"/>
</dbReference>
<dbReference type="NCBIfam" id="TIGR01608">
    <property type="entry name" value="citD"/>
    <property type="match status" value="1"/>
</dbReference>
<dbReference type="NCBIfam" id="NF009726">
    <property type="entry name" value="PRK13253.1"/>
    <property type="match status" value="1"/>
</dbReference>
<dbReference type="Pfam" id="PF06857">
    <property type="entry name" value="ACP"/>
    <property type="match status" value="1"/>
</dbReference>
<dbReference type="PIRSF" id="PIRSF002736">
    <property type="entry name" value="Citrt_lyas_gamma"/>
    <property type="match status" value="1"/>
</dbReference>